<dbReference type="EC" id="3.6.1.-" evidence="1"/>
<dbReference type="EMBL" id="CU207211">
    <property type="protein sequence ID" value="CAL62898.1"/>
    <property type="molecule type" value="Genomic_DNA"/>
</dbReference>
<dbReference type="SMR" id="A4G8R1"/>
<dbReference type="STRING" id="204773.HEAR2782"/>
<dbReference type="KEGG" id="har:HEAR2782"/>
<dbReference type="eggNOG" id="COG0494">
    <property type="taxonomic scope" value="Bacteria"/>
</dbReference>
<dbReference type="HOGENOM" id="CLU_087195_3_1_4"/>
<dbReference type="OrthoDB" id="9816040at2"/>
<dbReference type="Proteomes" id="UP000006697">
    <property type="component" value="Chromosome"/>
</dbReference>
<dbReference type="GO" id="GO:0016462">
    <property type="term" value="F:pyrophosphatase activity"/>
    <property type="evidence" value="ECO:0007669"/>
    <property type="project" value="UniProtKB-ARBA"/>
</dbReference>
<dbReference type="CDD" id="cd03671">
    <property type="entry name" value="NUDIX_Ap4A_hydrolase_plant_like"/>
    <property type="match status" value="1"/>
</dbReference>
<dbReference type="Gene3D" id="3.90.79.10">
    <property type="entry name" value="Nucleoside Triphosphate Pyrophosphohydrolase"/>
    <property type="match status" value="1"/>
</dbReference>
<dbReference type="HAMAP" id="MF_00298">
    <property type="entry name" value="Nudix_RppH"/>
    <property type="match status" value="1"/>
</dbReference>
<dbReference type="InterPro" id="IPR020476">
    <property type="entry name" value="Nudix_hydrolase"/>
</dbReference>
<dbReference type="InterPro" id="IPR015797">
    <property type="entry name" value="NUDIX_hydrolase-like_dom_sf"/>
</dbReference>
<dbReference type="InterPro" id="IPR020084">
    <property type="entry name" value="NUDIX_hydrolase_CS"/>
</dbReference>
<dbReference type="InterPro" id="IPR000086">
    <property type="entry name" value="NUDIX_hydrolase_dom"/>
</dbReference>
<dbReference type="InterPro" id="IPR022927">
    <property type="entry name" value="RppH"/>
</dbReference>
<dbReference type="NCBIfam" id="NF001935">
    <property type="entry name" value="PRK00714.1-2"/>
    <property type="match status" value="1"/>
</dbReference>
<dbReference type="NCBIfam" id="NF001937">
    <property type="entry name" value="PRK00714.1-4"/>
    <property type="match status" value="1"/>
</dbReference>
<dbReference type="NCBIfam" id="NF001938">
    <property type="entry name" value="PRK00714.1-5"/>
    <property type="match status" value="1"/>
</dbReference>
<dbReference type="PANTHER" id="PTHR43736">
    <property type="entry name" value="ADP-RIBOSE PYROPHOSPHATASE"/>
    <property type="match status" value="1"/>
</dbReference>
<dbReference type="PANTHER" id="PTHR43736:SF1">
    <property type="entry name" value="DIHYDRONEOPTERIN TRIPHOSPHATE DIPHOSPHATASE"/>
    <property type="match status" value="1"/>
</dbReference>
<dbReference type="Pfam" id="PF00293">
    <property type="entry name" value="NUDIX"/>
    <property type="match status" value="1"/>
</dbReference>
<dbReference type="PRINTS" id="PR00502">
    <property type="entry name" value="NUDIXFAMILY"/>
</dbReference>
<dbReference type="SUPFAM" id="SSF55811">
    <property type="entry name" value="Nudix"/>
    <property type="match status" value="1"/>
</dbReference>
<dbReference type="PROSITE" id="PS51462">
    <property type="entry name" value="NUDIX"/>
    <property type="match status" value="1"/>
</dbReference>
<dbReference type="PROSITE" id="PS00893">
    <property type="entry name" value="NUDIX_BOX"/>
    <property type="match status" value="1"/>
</dbReference>
<feature type="chain" id="PRO_1000021956" description="RNA pyrophosphohydrolase">
    <location>
        <begin position="1"/>
        <end position="193"/>
    </location>
</feature>
<feature type="domain" description="Nudix hydrolase" evidence="1">
    <location>
        <begin position="6"/>
        <end position="149"/>
    </location>
</feature>
<feature type="region of interest" description="Disordered" evidence="2">
    <location>
        <begin position="174"/>
        <end position="193"/>
    </location>
</feature>
<feature type="short sequence motif" description="Nudix box">
    <location>
        <begin position="38"/>
        <end position="59"/>
    </location>
</feature>
<protein>
    <recommendedName>
        <fullName evidence="1">RNA pyrophosphohydrolase</fullName>
        <ecNumber evidence="1">3.6.1.-</ecNumber>
    </recommendedName>
    <alternativeName>
        <fullName evidence="1">(Di)nucleoside polyphosphate hydrolase</fullName>
    </alternativeName>
</protein>
<comment type="function">
    <text evidence="1">Accelerates the degradation of transcripts by removing pyrophosphate from the 5'-end of triphosphorylated RNA, leading to a more labile monophosphorylated state that can stimulate subsequent ribonuclease cleavage.</text>
</comment>
<comment type="cofactor">
    <cofactor evidence="1">
        <name>a divalent metal cation</name>
        <dbReference type="ChEBI" id="CHEBI:60240"/>
    </cofactor>
</comment>
<comment type="similarity">
    <text evidence="1">Belongs to the Nudix hydrolase family. RppH subfamily.</text>
</comment>
<sequence>MLDREGFRPNVGIILINAQNEVWWGKRVREHSWQFPQGGIKFGETPEQAMFRELEEEVGLRAEHVKIIGRTRDWLRYEVPDHFIKREIRGHYKGQKQIWFLLRMVGRDCDVNLRLTEHPEFDAWRWHDYWVPLDVVIEFKRDVYQRALQELSRFLSRPAHPAPIHNTARYLRQTHSARKTDEPSTEQTKPNNE</sequence>
<name>RPPH_HERAR</name>
<accession>A4G8R1</accession>
<gene>
    <name evidence="1" type="primary">rppH</name>
    <name evidence="1" type="synonym">nudH</name>
    <name type="ordered locus">HEAR2782</name>
</gene>
<evidence type="ECO:0000255" key="1">
    <source>
        <dbReference type="HAMAP-Rule" id="MF_00298"/>
    </source>
</evidence>
<evidence type="ECO:0000256" key="2">
    <source>
        <dbReference type="SAM" id="MobiDB-lite"/>
    </source>
</evidence>
<reference key="1">
    <citation type="journal article" date="2007" name="PLoS Genet.">
        <title>A tale of two oxidation states: bacterial colonization of arsenic-rich environments.</title>
        <authorList>
            <person name="Muller D."/>
            <person name="Medigue C."/>
            <person name="Koechler S."/>
            <person name="Barbe V."/>
            <person name="Barakat M."/>
            <person name="Talla E."/>
            <person name="Bonnefoy V."/>
            <person name="Krin E."/>
            <person name="Arsene-Ploetze F."/>
            <person name="Carapito C."/>
            <person name="Chandler M."/>
            <person name="Cournoyer B."/>
            <person name="Cruveiller S."/>
            <person name="Dossat C."/>
            <person name="Duval S."/>
            <person name="Heymann M."/>
            <person name="Leize E."/>
            <person name="Lieutaud A."/>
            <person name="Lievremont D."/>
            <person name="Makita Y."/>
            <person name="Mangenot S."/>
            <person name="Nitschke W."/>
            <person name="Ortet P."/>
            <person name="Perdrial N."/>
            <person name="Schoepp B."/>
            <person name="Siguier P."/>
            <person name="Simeonova D.D."/>
            <person name="Rouy Z."/>
            <person name="Segurens B."/>
            <person name="Turlin E."/>
            <person name="Vallenet D."/>
            <person name="van Dorsselaer A."/>
            <person name="Weiss S."/>
            <person name="Weissenbach J."/>
            <person name="Lett M.-C."/>
            <person name="Danchin A."/>
            <person name="Bertin P.N."/>
        </authorList>
    </citation>
    <scope>NUCLEOTIDE SEQUENCE [LARGE SCALE GENOMIC DNA]</scope>
    <source>
        <strain>ULPAs1</strain>
    </source>
</reference>
<proteinExistence type="inferred from homology"/>
<organism>
    <name type="scientific">Herminiimonas arsenicoxydans</name>
    <dbReference type="NCBI Taxonomy" id="204773"/>
    <lineage>
        <taxon>Bacteria</taxon>
        <taxon>Pseudomonadati</taxon>
        <taxon>Pseudomonadota</taxon>
        <taxon>Betaproteobacteria</taxon>
        <taxon>Burkholderiales</taxon>
        <taxon>Oxalobacteraceae</taxon>
        <taxon>Herminiimonas</taxon>
    </lineage>
</organism>
<keyword id="KW-0378">Hydrolase</keyword>
<keyword id="KW-1185">Reference proteome</keyword>